<organism>
    <name type="scientific">Halobacterium salinarum (strain ATCC 700922 / JCM 11081 / NRC-1)</name>
    <name type="common">Halobacterium halobium</name>
    <dbReference type="NCBI Taxonomy" id="64091"/>
    <lineage>
        <taxon>Archaea</taxon>
        <taxon>Methanobacteriati</taxon>
        <taxon>Methanobacteriota</taxon>
        <taxon>Stenosarchaea group</taxon>
        <taxon>Halobacteria</taxon>
        <taxon>Halobacteriales</taxon>
        <taxon>Halobacteriaceae</taxon>
        <taxon>Halobacterium</taxon>
        <taxon>Halobacterium salinarum NRC-34001</taxon>
    </lineage>
</organism>
<protein>
    <recommendedName>
        <fullName evidence="1">Probable aminomethyltransferase</fullName>
        <ecNumber evidence="1">2.1.2.10</ecNumber>
    </recommendedName>
    <alternativeName>
        <fullName evidence="1">Glycine cleavage system T protein</fullName>
    </alternativeName>
</protein>
<dbReference type="EC" id="2.1.2.10" evidence="1"/>
<dbReference type="EMBL" id="AE004437">
    <property type="protein sequence ID" value="AAG19870.1"/>
    <property type="status" value="ALT_INIT"/>
    <property type="molecule type" value="Genomic_DNA"/>
</dbReference>
<dbReference type="PIR" id="B84313">
    <property type="entry name" value="B84313"/>
</dbReference>
<dbReference type="RefSeq" id="WP_010903168.1">
    <property type="nucleotide sequence ID" value="NC_002607.1"/>
</dbReference>
<dbReference type="SMR" id="Q9HPJ7"/>
<dbReference type="STRING" id="64091.VNG_1606G"/>
<dbReference type="PaxDb" id="64091-VNG_1606G"/>
<dbReference type="GeneID" id="68694284"/>
<dbReference type="KEGG" id="hal:VNG_1606G"/>
<dbReference type="PATRIC" id="fig|64091.14.peg.1223"/>
<dbReference type="HOGENOM" id="CLU_007884_10_2_2"/>
<dbReference type="InParanoid" id="Q9HPJ7"/>
<dbReference type="OrthoDB" id="2001at2157"/>
<dbReference type="PhylomeDB" id="Q9HPJ7"/>
<dbReference type="Proteomes" id="UP000000554">
    <property type="component" value="Chromosome"/>
</dbReference>
<dbReference type="GO" id="GO:0005960">
    <property type="term" value="C:glycine cleavage complex"/>
    <property type="evidence" value="ECO:0007669"/>
    <property type="project" value="InterPro"/>
</dbReference>
<dbReference type="GO" id="GO:0004047">
    <property type="term" value="F:aminomethyltransferase activity"/>
    <property type="evidence" value="ECO:0007669"/>
    <property type="project" value="UniProtKB-UniRule"/>
</dbReference>
<dbReference type="GO" id="GO:0008483">
    <property type="term" value="F:transaminase activity"/>
    <property type="evidence" value="ECO:0007669"/>
    <property type="project" value="UniProtKB-KW"/>
</dbReference>
<dbReference type="GO" id="GO:0019464">
    <property type="term" value="P:glycine decarboxylation via glycine cleavage system"/>
    <property type="evidence" value="ECO:0007669"/>
    <property type="project" value="UniProtKB-UniRule"/>
</dbReference>
<dbReference type="FunFam" id="2.40.30.110:FF:000003">
    <property type="entry name" value="Aminomethyltransferase"/>
    <property type="match status" value="1"/>
</dbReference>
<dbReference type="Gene3D" id="3.30.1360.120">
    <property type="entry name" value="Probable tRNA modification gtpase trme, domain 1"/>
    <property type="match status" value="1"/>
</dbReference>
<dbReference type="HAMAP" id="MF_00259">
    <property type="entry name" value="GcvT"/>
    <property type="match status" value="1"/>
</dbReference>
<dbReference type="InterPro" id="IPR006223">
    <property type="entry name" value="GCS_T"/>
</dbReference>
<dbReference type="InterPro" id="IPR022903">
    <property type="entry name" value="GCS_T_bac"/>
</dbReference>
<dbReference type="InterPro" id="IPR013977">
    <property type="entry name" value="GCST_C"/>
</dbReference>
<dbReference type="InterPro" id="IPR006222">
    <property type="entry name" value="GCV_T_N"/>
</dbReference>
<dbReference type="InterPro" id="IPR028896">
    <property type="entry name" value="GcvT/YgfZ/DmdA"/>
</dbReference>
<dbReference type="InterPro" id="IPR029043">
    <property type="entry name" value="GcvT/YgfZ_C"/>
</dbReference>
<dbReference type="InterPro" id="IPR027266">
    <property type="entry name" value="TrmE/GcvT_dom1"/>
</dbReference>
<dbReference type="NCBIfam" id="TIGR00528">
    <property type="entry name" value="gcvT"/>
    <property type="match status" value="1"/>
</dbReference>
<dbReference type="NCBIfam" id="NF001567">
    <property type="entry name" value="PRK00389.1"/>
    <property type="match status" value="1"/>
</dbReference>
<dbReference type="PANTHER" id="PTHR43757">
    <property type="entry name" value="AMINOMETHYLTRANSFERASE"/>
    <property type="match status" value="1"/>
</dbReference>
<dbReference type="PANTHER" id="PTHR43757:SF2">
    <property type="entry name" value="AMINOMETHYLTRANSFERASE, MITOCHONDRIAL"/>
    <property type="match status" value="1"/>
</dbReference>
<dbReference type="Pfam" id="PF01571">
    <property type="entry name" value="GCV_T"/>
    <property type="match status" value="1"/>
</dbReference>
<dbReference type="Pfam" id="PF08669">
    <property type="entry name" value="GCV_T_C"/>
    <property type="match status" value="1"/>
</dbReference>
<dbReference type="PIRSF" id="PIRSF006487">
    <property type="entry name" value="GcvT"/>
    <property type="match status" value="1"/>
</dbReference>
<dbReference type="SUPFAM" id="SSF101790">
    <property type="entry name" value="Aminomethyltransferase beta-barrel domain"/>
    <property type="match status" value="1"/>
</dbReference>
<dbReference type="SUPFAM" id="SSF103025">
    <property type="entry name" value="Folate-binding domain"/>
    <property type="match status" value="1"/>
</dbReference>
<keyword id="KW-0032">Aminotransferase</keyword>
<keyword id="KW-1185">Reference proteome</keyword>
<keyword id="KW-0808">Transferase</keyword>
<sequence length="363" mass="38199">MGLRTSPLHGRHEDRGASFTEFGGWNMPVDFDGIQAEHAAVREAAGIFDVSHMGEIEVSGPDAERLMQRLTTNDVSRLDPGDAQYAAITDDDGIMIDDTVVYRTPADWPGAFLFVPNAGHDAAAFDRWTDHRDAHDLDASVDNVTTDYGMVAVQGPDAPDLVAARAGDGVHDLGRFEAATVGVAGVECLVANTGYTGEAGVEIVFPADGAGAVWDAIANDCQPCGLGARDTLRMEHGFLLSGQDFDPEENPRTPFEAGIGFAVAPESGFVGRDALADTDSPEQQFVGLTLDERGVPRHGYAVTTPAGDEIGTVTSGTMSPTLGEPIGLGYVDSAHAADGTTVAVRIRGTDKQATITTPPFLDQ</sequence>
<reference key="1">
    <citation type="journal article" date="2000" name="Proc. Natl. Acad. Sci. U.S.A.">
        <title>Genome sequence of Halobacterium species NRC-1.</title>
        <authorList>
            <person name="Ng W.V."/>
            <person name="Kennedy S.P."/>
            <person name="Mahairas G.G."/>
            <person name="Berquist B."/>
            <person name="Pan M."/>
            <person name="Shukla H.D."/>
            <person name="Lasky S.R."/>
            <person name="Baliga N.S."/>
            <person name="Thorsson V."/>
            <person name="Sbrogna J."/>
            <person name="Swartzell S."/>
            <person name="Weir D."/>
            <person name="Hall J."/>
            <person name="Dahl T.A."/>
            <person name="Welti R."/>
            <person name="Goo Y.A."/>
            <person name="Leithauser B."/>
            <person name="Keller K."/>
            <person name="Cruz R."/>
            <person name="Danson M.J."/>
            <person name="Hough D.W."/>
            <person name="Maddocks D.G."/>
            <person name="Jablonski P.E."/>
            <person name="Krebs M.P."/>
            <person name="Angevine C.M."/>
            <person name="Dale H."/>
            <person name="Isenbarger T.A."/>
            <person name="Peck R.F."/>
            <person name="Pohlschroder M."/>
            <person name="Spudich J.L."/>
            <person name="Jung K.-H."/>
            <person name="Alam M."/>
            <person name="Freitas T."/>
            <person name="Hou S."/>
            <person name="Daniels C.J."/>
            <person name="Dennis P.P."/>
            <person name="Omer A.D."/>
            <person name="Ebhardt H."/>
            <person name="Lowe T.M."/>
            <person name="Liang P."/>
            <person name="Riley M."/>
            <person name="Hood L."/>
            <person name="DasSarma S."/>
        </authorList>
    </citation>
    <scope>NUCLEOTIDE SEQUENCE [LARGE SCALE GENOMIC DNA]</scope>
    <source>
        <strain>ATCC 700922 / JCM 11081 / NRC-1</strain>
    </source>
</reference>
<name>GCST_HALSA</name>
<proteinExistence type="inferred from homology"/>
<feature type="chain" id="PRO_0000122622" description="Probable aminomethyltransferase">
    <location>
        <begin position="1"/>
        <end position="363"/>
    </location>
</feature>
<comment type="function">
    <text evidence="1">The glycine cleavage system catalyzes the degradation of glycine.</text>
</comment>
<comment type="catalytic activity">
    <reaction evidence="1">
        <text>N(6)-[(R)-S(8)-aminomethyldihydrolipoyl]-L-lysyl-[protein] + (6S)-5,6,7,8-tetrahydrofolate = N(6)-[(R)-dihydrolipoyl]-L-lysyl-[protein] + (6R)-5,10-methylene-5,6,7,8-tetrahydrofolate + NH4(+)</text>
        <dbReference type="Rhea" id="RHEA:16945"/>
        <dbReference type="Rhea" id="RHEA-COMP:10475"/>
        <dbReference type="Rhea" id="RHEA-COMP:10492"/>
        <dbReference type="ChEBI" id="CHEBI:15636"/>
        <dbReference type="ChEBI" id="CHEBI:28938"/>
        <dbReference type="ChEBI" id="CHEBI:57453"/>
        <dbReference type="ChEBI" id="CHEBI:83100"/>
        <dbReference type="ChEBI" id="CHEBI:83143"/>
        <dbReference type="EC" id="2.1.2.10"/>
    </reaction>
</comment>
<comment type="subunit">
    <text evidence="1">The glycine cleavage system is composed of four proteins: P, T, L and H.</text>
</comment>
<comment type="similarity">
    <text evidence="1">Belongs to the GcvT family.</text>
</comment>
<comment type="sequence caution" evidence="2">
    <conflict type="erroneous initiation">
        <sequence resource="EMBL-CDS" id="AAG19870"/>
    </conflict>
</comment>
<accession>Q9HPJ7</accession>
<gene>
    <name evidence="1" type="primary">gcvT</name>
    <name type="synonym">gcvT1</name>
    <name type="ordered locus">VNG_1606G</name>
</gene>
<evidence type="ECO:0000255" key="1">
    <source>
        <dbReference type="HAMAP-Rule" id="MF_00259"/>
    </source>
</evidence>
<evidence type="ECO:0000305" key="2"/>